<evidence type="ECO:0000255" key="1">
    <source>
        <dbReference type="HAMAP-Rule" id="MF_00005"/>
    </source>
</evidence>
<reference key="1">
    <citation type="submission" date="2008-10" db="EMBL/GenBank/DDBJ databases">
        <title>Genome sequence of Bacillus cereus B4264.</title>
        <authorList>
            <person name="Dodson R.J."/>
            <person name="Durkin A.S."/>
            <person name="Rosovitz M.J."/>
            <person name="Rasko D.A."/>
            <person name="Hoffmaster A."/>
            <person name="Ravel J."/>
            <person name="Sutton G."/>
        </authorList>
    </citation>
    <scope>NUCLEOTIDE SEQUENCE [LARGE SCALE GENOMIC DNA]</scope>
    <source>
        <strain>B4264</strain>
    </source>
</reference>
<organism>
    <name type="scientific">Bacillus cereus (strain B4264)</name>
    <dbReference type="NCBI Taxonomy" id="405532"/>
    <lineage>
        <taxon>Bacteria</taxon>
        <taxon>Bacillati</taxon>
        <taxon>Bacillota</taxon>
        <taxon>Bacilli</taxon>
        <taxon>Bacillales</taxon>
        <taxon>Bacillaceae</taxon>
        <taxon>Bacillus</taxon>
        <taxon>Bacillus cereus group</taxon>
    </lineage>
</organism>
<comment type="catalytic activity">
    <reaction evidence="1">
        <text>L-citrulline + L-aspartate + ATP = 2-(N(omega)-L-arginino)succinate + AMP + diphosphate + H(+)</text>
        <dbReference type="Rhea" id="RHEA:10932"/>
        <dbReference type="ChEBI" id="CHEBI:15378"/>
        <dbReference type="ChEBI" id="CHEBI:29991"/>
        <dbReference type="ChEBI" id="CHEBI:30616"/>
        <dbReference type="ChEBI" id="CHEBI:33019"/>
        <dbReference type="ChEBI" id="CHEBI:57472"/>
        <dbReference type="ChEBI" id="CHEBI:57743"/>
        <dbReference type="ChEBI" id="CHEBI:456215"/>
        <dbReference type="EC" id="6.3.4.5"/>
    </reaction>
</comment>
<comment type="pathway">
    <text evidence="1">Amino-acid biosynthesis; L-arginine biosynthesis; L-arginine from L-ornithine and carbamoyl phosphate: step 2/3.</text>
</comment>
<comment type="subunit">
    <text evidence="1">Homotetramer.</text>
</comment>
<comment type="subcellular location">
    <subcellularLocation>
        <location evidence="1">Cytoplasm</location>
    </subcellularLocation>
</comment>
<comment type="similarity">
    <text evidence="1">Belongs to the argininosuccinate synthase family. Type 1 subfamily.</text>
</comment>
<protein>
    <recommendedName>
        <fullName evidence="1">Argininosuccinate synthase</fullName>
        <ecNumber evidence="1">6.3.4.5</ecNumber>
    </recommendedName>
    <alternativeName>
        <fullName evidence="1">Citrulline--aspartate ligase</fullName>
    </alternativeName>
</protein>
<proteinExistence type="inferred from homology"/>
<name>ASSY_BACC4</name>
<keyword id="KW-0028">Amino-acid biosynthesis</keyword>
<keyword id="KW-0055">Arginine biosynthesis</keyword>
<keyword id="KW-0067">ATP-binding</keyword>
<keyword id="KW-0963">Cytoplasm</keyword>
<keyword id="KW-0436">Ligase</keyword>
<keyword id="KW-0547">Nucleotide-binding</keyword>
<accession>B7H6Y5</accession>
<sequence>MEKKKVVLAYSGGLDTSVAIKWLQEKNYDIIALCLDLGEGKDLAFVKEKALSVGAIKSYMIDVQEEFANEYALMAMQAHTLYEGKYPLVSALSRPLIAKKLVEIAEQEGATAVAHGCTGKGNDQVRFEVSIQALNPYLEVIAPVREWKWSREEEIAYAKENDVPIPINLDSPFSIDQNLWGRSNECGILEDPWAAPPEDAYEMTLALEDTPNKPEFVEIGFEAGVPTTLNGTAYSLAELIKTLNALAGKHGVGRIDHVENRLVGIKSREVYECPAAMTLITAHKELEDLTHVKEVAHFKPVIEQKITELIYNGLWFSPLKQALHAFLQETQKNVTGTVRVKLFKGHAIVEGRKSEYSLYDEKLATYTAQDEFNHDAAVGFISLFGLPTKVYSQVNQKKVEA</sequence>
<dbReference type="EC" id="6.3.4.5" evidence="1"/>
<dbReference type="EMBL" id="CP001176">
    <property type="protein sequence ID" value="ACK62097.1"/>
    <property type="molecule type" value="Genomic_DNA"/>
</dbReference>
<dbReference type="RefSeq" id="WP_000412315.1">
    <property type="nucleotide sequence ID" value="NZ_VEHB01000005.1"/>
</dbReference>
<dbReference type="SMR" id="B7H6Y5"/>
<dbReference type="KEGG" id="bcb:BCB4264_A4738"/>
<dbReference type="HOGENOM" id="CLU_032784_4_2_9"/>
<dbReference type="UniPathway" id="UPA00068">
    <property type="reaction ID" value="UER00113"/>
</dbReference>
<dbReference type="Proteomes" id="UP000007096">
    <property type="component" value="Chromosome"/>
</dbReference>
<dbReference type="GO" id="GO:0005737">
    <property type="term" value="C:cytoplasm"/>
    <property type="evidence" value="ECO:0007669"/>
    <property type="project" value="UniProtKB-SubCell"/>
</dbReference>
<dbReference type="GO" id="GO:0004055">
    <property type="term" value="F:argininosuccinate synthase activity"/>
    <property type="evidence" value="ECO:0007669"/>
    <property type="project" value="UniProtKB-UniRule"/>
</dbReference>
<dbReference type="GO" id="GO:0005524">
    <property type="term" value="F:ATP binding"/>
    <property type="evidence" value="ECO:0007669"/>
    <property type="project" value="UniProtKB-UniRule"/>
</dbReference>
<dbReference type="GO" id="GO:0000053">
    <property type="term" value="P:argininosuccinate metabolic process"/>
    <property type="evidence" value="ECO:0007669"/>
    <property type="project" value="TreeGrafter"/>
</dbReference>
<dbReference type="GO" id="GO:0006526">
    <property type="term" value="P:L-arginine biosynthetic process"/>
    <property type="evidence" value="ECO:0007669"/>
    <property type="project" value="UniProtKB-UniRule"/>
</dbReference>
<dbReference type="GO" id="GO:0000050">
    <property type="term" value="P:urea cycle"/>
    <property type="evidence" value="ECO:0007669"/>
    <property type="project" value="TreeGrafter"/>
</dbReference>
<dbReference type="CDD" id="cd01999">
    <property type="entry name" value="ASS"/>
    <property type="match status" value="1"/>
</dbReference>
<dbReference type="FunFam" id="1.20.5.470:FF:000002">
    <property type="entry name" value="Argininosuccinate synthase"/>
    <property type="match status" value="1"/>
</dbReference>
<dbReference type="FunFam" id="3.40.50.620:FF:000038">
    <property type="entry name" value="Argininosuccinate synthase"/>
    <property type="match status" value="1"/>
</dbReference>
<dbReference type="FunFam" id="3.90.1260.10:FF:000007">
    <property type="entry name" value="Argininosuccinate synthase"/>
    <property type="match status" value="1"/>
</dbReference>
<dbReference type="Gene3D" id="3.90.1260.10">
    <property type="entry name" value="Argininosuccinate synthetase, chain A, domain 2"/>
    <property type="match status" value="1"/>
</dbReference>
<dbReference type="Gene3D" id="3.40.50.620">
    <property type="entry name" value="HUPs"/>
    <property type="match status" value="1"/>
</dbReference>
<dbReference type="Gene3D" id="1.20.5.470">
    <property type="entry name" value="Single helix bin"/>
    <property type="match status" value="1"/>
</dbReference>
<dbReference type="HAMAP" id="MF_00005">
    <property type="entry name" value="Arg_succ_synth_type1"/>
    <property type="match status" value="1"/>
</dbReference>
<dbReference type="InterPro" id="IPR048268">
    <property type="entry name" value="Arginosuc_syn_C"/>
</dbReference>
<dbReference type="InterPro" id="IPR048267">
    <property type="entry name" value="Arginosuc_syn_N"/>
</dbReference>
<dbReference type="InterPro" id="IPR001518">
    <property type="entry name" value="Arginosuc_synth"/>
</dbReference>
<dbReference type="InterPro" id="IPR018223">
    <property type="entry name" value="Arginosuc_synth_CS"/>
</dbReference>
<dbReference type="InterPro" id="IPR023434">
    <property type="entry name" value="Arginosuc_synth_type_1_subfam"/>
</dbReference>
<dbReference type="InterPro" id="IPR024074">
    <property type="entry name" value="AS_cat/multimer_dom_body"/>
</dbReference>
<dbReference type="InterPro" id="IPR014729">
    <property type="entry name" value="Rossmann-like_a/b/a_fold"/>
</dbReference>
<dbReference type="NCBIfam" id="TIGR00032">
    <property type="entry name" value="argG"/>
    <property type="match status" value="1"/>
</dbReference>
<dbReference type="NCBIfam" id="NF001770">
    <property type="entry name" value="PRK00509.1"/>
    <property type="match status" value="1"/>
</dbReference>
<dbReference type="PANTHER" id="PTHR11587">
    <property type="entry name" value="ARGININOSUCCINATE SYNTHASE"/>
    <property type="match status" value="1"/>
</dbReference>
<dbReference type="PANTHER" id="PTHR11587:SF2">
    <property type="entry name" value="ARGININOSUCCINATE SYNTHASE"/>
    <property type="match status" value="1"/>
</dbReference>
<dbReference type="Pfam" id="PF20979">
    <property type="entry name" value="Arginosuc_syn_C"/>
    <property type="match status" value="1"/>
</dbReference>
<dbReference type="Pfam" id="PF00764">
    <property type="entry name" value="Arginosuc_synth"/>
    <property type="match status" value="1"/>
</dbReference>
<dbReference type="SUPFAM" id="SSF52402">
    <property type="entry name" value="Adenine nucleotide alpha hydrolases-like"/>
    <property type="match status" value="1"/>
</dbReference>
<dbReference type="SUPFAM" id="SSF69864">
    <property type="entry name" value="Argininosuccinate synthetase, C-terminal domain"/>
    <property type="match status" value="1"/>
</dbReference>
<dbReference type="PROSITE" id="PS00564">
    <property type="entry name" value="ARGININOSUCCIN_SYN_1"/>
    <property type="match status" value="1"/>
</dbReference>
<dbReference type="PROSITE" id="PS00565">
    <property type="entry name" value="ARGININOSUCCIN_SYN_2"/>
    <property type="match status" value="1"/>
</dbReference>
<gene>
    <name evidence="1" type="primary">argG</name>
    <name type="ordered locus">BCB4264_A4738</name>
</gene>
<feature type="chain" id="PRO_1000116187" description="Argininosuccinate synthase">
    <location>
        <begin position="1"/>
        <end position="401"/>
    </location>
</feature>
<feature type="binding site" evidence="1">
    <location>
        <begin position="9"/>
        <end position="17"/>
    </location>
    <ligand>
        <name>ATP</name>
        <dbReference type="ChEBI" id="CHEBI:30616"/>
    </ligand>
</feature>
<feature type="binding site" evidence="1">
    <location>
        <position position="86"/>
    </location>
    <ligand>
        <name>L-citrulline</name>
        <dbReference type="ChEBI" id="CHEBI:57743"/>
    </ligand>
</feature>
<feature type="binding site" evidence="1">
    <location>
        <position position="116"/>
    </location>
    <ligand>
        <name>ATP</name>
        <dbReference type="ChEBI" id="CHEBI:30616"/>
    </ligand>
</feature>
<feature type="binding site" evidence="1">
    <location>
        <position position="118"/>
    </location>
    <ligand>
        <name>L-aspartate</name>
        <dbReference type="ChEBI" id="CHEBI:29991"/>
    </ligand>
</feature>
<feature type="binding site" evidence="1">
    <location>
        <position position="122"/>
    </location>
    <ligand>
        <name>L-aspartate</name>
        <dbReference type="ChEBI" id="CHEBI:29991"/>
    </ligand>
</feature>
<feature type="binding site" evidence="1">
    <location>
        <position position="122"/>
    </location>
    <ligand>
        <name>L-citrulline</name>
        <dbReference type="ChEBI" id="CHEBI:57743"/>
    </ligand>
</feature>
<feature type="binding site" evidence="1">
    <location>
        <position position="123"/>
    </location>
    <ligand>
        <name>L-aspartate</name>
        <dbReference type="ChEBI" id="CHEBI:29991"/>
    </ligand>
</feature>
<feature type="binding site" evidence="1">
    <location>
        <position position="126"/>
    </location>
    <ligand>
        <name>L-citrulline</name>
        <dbReference type="ChEBI" id="CHEBI:57743"/>
    </ligand>
</feature>
<feature type="binding site" evidence="1">
    <location>
        <position position="174"/>
    </location>
    <ligand>
        <name>L-citrulline</name>
        <dbReference type="ChEBI" id="CHEBI:57743"/>
    </ligand>
</feature>
<feature type="binding site" evidence="1">
    <location>
        <position position="183"/>
    </location>
    <ligand>
        <name>L-citrulline</name>
        <dbReference type="ChEBI" id="CHEBI:57743"/>
    </ligand>
</feature>
<feature type="binding site" evidence="1">
    <location>
        <position position="259"/>
    </location>
    <ligand>
        <name>L-citrulline</name>
        <dbReference type="ChEBI" id="CHEBI:57743"/>
    </ligand>
</feature>
<feature type="binding site" evidence="1">
    <location>
        <position position="271"/>
    </location>
    <ligand>
        <name>L-citrulline</name>
        <dbReference type="ChEBI" id="CHEBI:57743"/>
    </ligand>
</feature>